<organism>
    <name type="scientific">Mycobacterium tuberculosis (strain ATCC 25618 / H37Rv)</name>
    <dbReference type="NCBI Taxonomy" id="83332"/>
    <lineage>
        <taxon>Bacteria</taxon>
        <taxon>Bacillati</taxon>
        <taxon>Actinomycetota</taxon>
        <taxon>Actinomycetes</taxon>
        <taxon>Mycobacteriales</taxon>
        <taxon>Mycobacteriaceae</taxon>
        <taxon>Mycobacterium</taxon>
        <taxon>Mycobacterium tuberculosis complex</taxon>
    </lineage>
</organism>
<accession>P9WF39</accession>
<accession>F2GFC4</accession>
<accession>L0TGF3</accession>
<accession>O69649</accession>
<accession>Q7D530</accession>
<dbReference type="EMBL" id="AL123456">
    <property type="protein sequence ID" value="CCP46505.1"/>
    <property type="molecule type" value="Genomic_DNA"/>
</dbReference>
<dbReference type="PIR" id="B70791">
    <property type="entry name" value="B70791"/>
</dbReference>
<dbReference type="RefSeq" id="NP_218198.2">
    <property type="nucleotide sequence ID" value="NC_000962.3"/>
</dbReference>
<dbReference type="RefSeq" id="WP_003419743.1">
    <property type="nucleotide sequence ID" value="NZ_NVQJ01000028.1"/>
</dbReference>
<dbReference type="PDB" id="7F7N">
    <property type="method" value="NMR"/>
    <property type="chains" value="A=1-118"/>
</dbReference>
<dbReference type="PDBsum" id="7F7N"/>
<dbReference type="SMR" id="P9WF39"/>
<dbReference type="STRING" id="83332.Rv3681c"/>
<dbReference type="PaxDb" id="83332-Rv3681c"/>
<dbReference type="GeneID" id="45427677"/>
<dbReference type="GeneID" id="885320"/>
<dbReference type="KEGG" id="mtu:Rv3681c"/>
<dbReference type="KEGG" id="mtv:RVBD_3681c"/>
<dbReference type="TubercuList" id="Rv3681c"/>
<dbReference type="eggNOG" id="ENOG5032TCV">
    <property type="taxonomic scope" value="Bacteria"/>
</dbReference>
<dbReference type="InParanoid" id="P9WF39"/>
<dbReference type="OrthoDB" id="4228525at2"/>
<dbReference type="PhylomeDB" id="P9WF39"/>
<dbReference type="Proteomes" id="UP000001584">
    <property type="component" value="Chromosome"/>
</dbReference>
<dbReference type="GO" id="GO:0005737">
    <property type="term" value="C:cytoplasm"/>
    <property type="evidence" value="ECO:0007669"/>
    <property type="project" value="UniProtKB-SubCell"/>
</dbReference>
<dbReference type="GO" id="GO:0009274">
    <property type="term" value="C:peptidoglycan-based cell wall"/>
    <property type="evidence" value="ECO:0007005"/>
    <property type="project" value="MTBBASE"/>
</dbReference>
<dbReference type="GO" id="GO:0051539">
    <property type="term" value="F:4 iron, 4 sulfur cluster binding"/>
    <property type="evidence" value="ECO:0000314"/>
    <property type="project" value="MTBBASE"/>
</dbReference>
<dbReference type="GO" id="GO:0035731">
    <property type="term" value="F:dinitrosyl-iron complex binding"/>
    <property type="evidence" value="ECO:0007669"/>
    <property type="project" value="UniProtKB-UniRule"/>
</dbReference>
<dbReference type="GO" id="GO:0003677">
    <property type="term" value="F:DNA binding"/>
    <property type="evidence" value="ECO:0000314"/>
    <property type="project" value="MTBBASE"/>
</dbReference>
<dbReference type="GO" id="GO:0046872">
    <property type="term" value="F:metal ion binding"/>
    <property type="evidence" value="ECO:0007669"/>
    <property type="project" value="UniProtKB-KW"/>
</dbReference>
<dbReference type="GO" id="GO:0047134">
    <property type="term" value="F:protein-disulfide reductase [NAD(P)H] activity"/>
    <property type="evidence" value="ECO:0000314"/>
    <property type="project" value="MTBBASE"/>
</dbReference>
<dbReference type="GO" id="GO:0045454">
    <property type="term" value="P:cell redox homeostasis"/>
    <property type="evidence" value="ECO:0000318"/>
    <property type="project" value="GO_Central"/>
</dbReference>
<dbReference type="GO" id="GO:0045892">
    <property type="term" value="P:negative regulation of DNA-templated transcription"/>
    <property type="evidence" value="ECO:0000318"/>
    <property type="project" value="GO_Central"/>
</dbReference>
<dbReference type="HAMAP" id="MF_01479">
    <property type="entry name" value="WhiB"/>
    <property type="match status" value="1"/>
</dbReference>
<dbReference type="InterPro" id="IPR034768">
    <property type="entry name" value="4FE4S_WBL"/>
</dbReference>
<dbReference type="InterPro" id="IPR003482">
    <property type="entry name" value="Whib"/>
</dbReference>
<dbReference type="PANTHER" id="PTHR38839:SF7">
    <property type="entry name" value="TRANSCRIPTIONAL REGULATOR WHIB4"/>
    <property type="match status" value="1"/>
</dbReference>
<dbReference type="PANTHER" id="PTHR38839">
    <property type="entry name" value="TRANSCRIPTIONAL REGULATOR WHID-RELATED"/>
    <property type="match status" value="1"/>
</dbReference>
<dbReference type="Pfam" id="PF02467">
    <property type="entry name" value="Whib"/>
    <property type="match status" value="1"/>
</dbReference>
<dbReference type="PROSITE" id="PS51674">
    <property type="entry name" value="4FE4S_WBL"/>
    <property type="match status" value="1"/>
</dbReference>
<feature type="chain" id="PRO_0000420383" description="Transcriptional regulator WhiB4">
    <location>
        <begin position="1"/>
        <end position="118"/>
    </location>
</feature>
<feature type="domain" description="4Fe-4S Wbl-type">
    <location>
        <begin position="36"/>
        <end position="92"/>
    </location>
</feature>
<feature type="binding site" evidence="5">
    <location>
        <position position="37"/>
    </location>
    <ligand>
        <name>[4Fe-4S] cluster</name>
        <dbReference type="ChEBI" id="CHEBI:49883"/>
    </ligand>
</feature>
<feature type="binding site" evidence="5">
    <location>
        <position position="59"/>
    </location>
    <ligand>
        <name>[4Fe-4S] cluster</name>
        <dbReference type="ChEBI" id="CHEBI:49883"/>
    </ligand>
</feature>
<feature type="binding site" evidence="5">
    <location>
        <position position="62"/>
    </location>
    <ligand>
        <name>[4Fe-4S] cluster</name>
        <dbReference type="ChEBI" id="CHEBI:49883"/>
    </ligand>
</feature>
<feature type="binding site" evidence="5">
    <location>
        <position position="68"/>
    </location>
    <ligand>
        <name>[4Fe-4S] cluster</name>
        <dbReference type="ChEBI" id="CHEBI:49883"/>
    </ligand>
</feature>
<feature type="disulfide bond" description="Upon loss of 4Fe-S clusters" evidence="5">
    <location>
        <begin position="37"/>
        <end position="68"/>
    </location>
</feature>
<feature type="disulfide bond" description="Upon loss of 4Fe-S clusters" evidence="5">
    <location>
        <begin position="59"/>
        <end position="62"/>
    </location>
</feature>
<feature type="mutagenesis site" description="Apo-form does not bind DNA." evidence="2 4">
    <original>C</original>
    <variation>A</variation>
    <location>
        <position position="37"/>
    </location>
</feature>
<feature type="mutagenesis site" description="Partial loss of the Fe-S center. Complete loss of center and of disulfide reductase; when associated with S-59; S-62 and S-68." evidence="2 4">
    <original>C</original>
    <variation>S</variation>
    <location>
        <position position="37"/>
    </location>
</feature>
<feature type="mutagenesis site" description="Apo-form does not bind DNA." evidence="2 4">
    <original>C</original>
    <variation>A</variation>
    <location>
        <position position="59"/>
    </location>
</feature>
<feature type="mutagenesis site" description="Partial loss of the Fe-S center. Complete loss of center and of disulfide reductase; when associated with S-37; S-62 and S-68." evidence="2 4">
    <original>C</original>
    <variation>S</variation>
    <location>
        <position position="59"/>
    </location>
</feature>
<feature type="mutagenesis site" description="Apo-form does not bind DNA." evidence="2 4">
    <original>C</original>
    <variation>A</variation>
    <location>
        <position position="62"/>
    </location>
</feature>
<feature type="mutagenesis site" description="Partial loss of the Fe-S center. Complete loss of center and of disulfide reductase; when associated with S-37; S-59 and S-68." evidence="2 4">
    <original>C</original>
    <variation>S</variation>
    <location>
        <position position="62"/>
    </location>
</feature>
<feature type="mutagenesis site" description="Apo-form does not bind DNA." evidence="2 4">
    <original>C</original>
    <variation>A</variation>
    <location>
        <position position="68"/>
    </location>
</feature>
<feature type="mutagenesis site" description="Partial loss of the Fe-S center. Complete loss of center and of disulfide reductase; when associated with S-37; S-59 and S-62." evidence="2 4">
    <original>C</original>
    <variation>S</variation>
    <location>
        <position position="68"/>
    </location>
</feature>
<feature type="helix" evidence="6">
    <location>
        <begin position="24"/>
        <end position="30"/>
    </location>
</feature>
<feature type="strand" evidence="6">
    <location>
        <begin position="35"/>
        <end position="37"/>
    </location>
</feature>
<feature type="turn" evidence="6">
    <location>
        <begin position="42"/>
        <end position="44"/>
    </location>
</feature>
<feature type="helix" evidence="6">
    <location>
        <begin position="45"/>
        <end position="48"/>
    </location>
</feature>
<feature type="helix" evidence="6">
    <location>
        <begin position="54"/>
        <end position="58"/>
    </location>
</feature>
<feature type="turn" evidence="6">
    <location>
        <begin position="67"/>
        <end position="72"/>
    </location>
</feature>
<feature type="strand" evidence="6">
    <location>
        <begin position="79"/>
        <end position="81"/>
    </location>
</feature>
<feature type="helix" evidence="6">
    <location>
        <begin position="87"/>
        <end position="96"/>
    </location>
</feature>
<feature type="helix" evidence="6">
    <location>
        <begin position="101"/>
        <end position="112"/>
    </location>
</feature>
<name>WHIB4_MYCTU</name>
<proteinExistence type="evidence at protein level"/>
<reference key="1">
    <citation type="journal article" date="1998" name="Nature">
        <title>Deciphering the biology of Mycobacterium tuberculosis from the complete genome sequence.</title>
        <authorList>
            <person name="Cole S.T."/>
            <person name="Brosch R."/>
            <person name="Parkhill J."/>
            <person name="Garnier T."/>
            <person name="Churcher C.M."/>
            <person name="Harris D.E."/>
            <person name="Gordon S.V."/>
            <person name="Eiglmeier K."/>
            <person name="Gas S."/>
            <person name="Barry C.E. III"/>
            <person name="Tekaia F."/>
            <person name="Badcock K."/>
            <person name="Basham D."/>
            <person name="Brown D."/>
            <person name="Chillingworth T."/>
            <person name="Connor R."/>
            <person name="Davies R.M."/>
            <person name="Devlin K."/>
            <person name="Feltwell T."/>
            <person name="Gentles S."/>
            <person name="Hamlin N."/>
            <person name="Holroyd S."/>
            <person name="Hornsby T."/>
            <person name="Jagels K."/>
            <person name="Krogh A."/>
            <person name="McLean J."/>
            <person name="Moule S."/>
            <person name="Murphy L.D."/>
            <person name="Oliver S."/>
            <person name="Osborne J."/>
            <person name="Quail M.A."/>
            <person name="Rajandream M.A."/>
            <person name="Rogers J."/>
            <person name="Rutter S."/>
            <person name="Seeger K."/>
            <person name="Skelton S."/>
            <person name="Squares S."/>
            <person name="Squares R."/>
            <person name="Sulston J.E."/>
            <person name="Taylor K."/>
            <person name="Whitehead S."/>
            <person name="Barrell B.G."/>
        </authorList>
    </citation>
    <scope>NUCLEOTIDE SEQUENCE [LARGE SCALE GENOMIC DNA]</scope>
    <source>
        <strain>ATCC 25618 / H37Rv</strain>
    </source>
</reference>
<reference key="2">
    <citation type="journal article" date="2007" name="Mol. Microbiol.">
        <title>Molecular function of WhiB4/Rv3681c of Mycobacterium tuberculosis H37Rv: a [4Fe-4S] cluster co-ordinating protein disulphide reductase.</title>
        <authorList>
            <person name="Alam M.S."/>
            <person name="Garg S.K."/>
            <person name="Agrawal P."/>
        </authorList>
    </citation>
    <scope>FUNCTION AS A PROTEIN DISULFIDE REDUCTASE</scope>
    <scope>COFACTOR</scope>
    <scope>SUBUNIT</scope>
    <scope>MASS SPECTROMETRY</scope>
    <scope>DISULFIDE BONDS</scope>
    <scope>MUTAGENESIS OF CYS-37; CYS-59; CYS-62 AND CYS-68</scope>
    <source>
        <strain>ATCC 25618 / H37Rv</strain>
    </source>
</reference>
<reference key="3">
    <citation type="journal article" date="2009" name="FEBS J.">
        <title>Studies on structural and functional divergence among seven WhiB proteins of Mycobacterium tuberculosis H37Rv.</title>
        <authorList>
            <person name="Alam M.S."/>
            <person name="Garg S.K."/>
            <person name="Agrawal P."/>
        </authorList>
    </citation>
    <scope>FUNCTION</scope>
    <scope>COFACTOR</scope>
    <scope>DISULFIDE BOND</scope>
    <source>
        <strain>ATCC 25618 / H37Rv</strain>
    </source>
</reference>
<reference key="4">
    <citation type="journal article" date="2012" name="Mol. Microbiol.">
        <title>Mycobacterium tuberculosis WhiB4 regulates oxidative stress response to modulate survival and dissemination in vivo.</title>
        <authorList>
            <person name="Chawla M."/>
            <person name="Parikh P."/>
            <person name="Saxena A."/>
            <person name="Munshi M."/>
            <person name="Mehta M."/>
            <person name="Mai D."/>
            <person name="Srivastava A.K."/>
            <person name="Narasimhulu K.V."/>
            <person name="Redding K.E."/>
            <person name="Vashi N."/>
            <person name="Kumar D."/>
            <person name="Steyn A.J."/>
            <person name="Singh A."/>
        </authorList>
    </citation>
    <scope>FUNCTION IN TRANSCRIPTION</scope>
    <scope>COFACTOR</scope>
    <scope>DINITROSYLATION</scope>
    <scope>SUBUNIT</scope>
    <scope>DNA-BINDING</scope>
    <scope>DISULFIDE BOND</scope>
    <scope>DISRUPTION PHENOTYPE</scope>
    <scope>MUTAGENESIS OF CYS-37; CYS-59; CYS-62 AND CYS-68</scope>
    <source>
        <strain>ATCC 25618 / H37Rv</strain>
    </source>
</reference>
<comment type="function">
    <text evidence="2 3 4">Redox-responsive transcriptional regulator that regulates a set of genes involved in protection against environmental stresses encountered during infection. The loss of the O(2) and NO-responsive 4Fe-4S cluster and subsequent redox modifications of Cys residue thiols (possibly by disulfide bond formation) may activate its role in gene regulation. The thiol-oxidized apo-form binds in a sequence non-specific manner to GC-rich DNA, probably in the minor groove. Represses transcription of a number of genes including itself. The reduced apo-form and holo-form do not bind DNA. The apo-form can act as protein disulfide reductase.</text>
</comment>
<comment type="cofactor">
    <cofactor evidence="2 3 4">
        <name>[4Fe-4S] cluster</name>
        <dbReference type="ChEBI" id="CHEBI:49883"/>
    </cofactor>
    <text evidence="2 3 4">Binds 1 [4Fe-4S] cluster per subunit. The cluster responds to both O(2) and NO. Following nitrosylation of the [4Fe-4S] cluster binds 1 [4Fe-8(NO)] cluster per subunit.</text>
</comment>
<comment type="subunit">
    <text evidence="2 4">Homodimer in the presence of reducing agents (PubMed:17302817); the oxidized apo-form makes dimers and trimers while the redeced apo-form does not (PubMed:22780904). Upon over expression in aerobically grown M.smegmatis, apo-WhiB4 forms trimers held together by disulfide bonds.</text>
</comment>
<comment type="subcellular location">
    <subcellularLocation>
        <location evidence="1">Cytoplasm</location>
    </subcellularLocation>
</comment>
<comment type="PTM">
    <text>The 4Fe-4S cluster is very sensitive to air, degrading from 4Fe-4S via 3Fe-3S to 2Fe-2S then cluster loss. Upon cluster removal intramolecular disulfide bonds are formed.</text>
</comment>
<comment type="PTM">
    <text>Can be nitrosylated by NO, leading to the formation of a tetrakis-cysteinyl [Fe4-(NO)8] complex.</text>
</comment>
<comment type="mass spectrometry" mass="18047.83" method="MALDI" evidence="2">
    <text>Fully oxidized recombinant protein tagged at both termini.</text>
</comment>
<comment type="mass spectrometry" mass="18275.18" method="MALDI" evidence="2">
    <text>Fully reduced recombinant protein tagged at both termini.</text>
</comment>
<comment type="disruption phenotype">
    <text evidence="4">During aerobic growth in culture grows more slowly over the whole life cycle, a 2X reduced ratio of NAD(+)/NADH (reflects redox metabolism) and a 1.5X reduction in membrane potential. Has increased resistance to oxidative stress. Enhanced growth in uninduced and activated macrophages, as well as enhanced growth at reduced O(2) tension. However reduced survival in guinea pig spleen but not lungs following aerosol infection. A number of genes are induced, including whiB4, whiB6, genes involved in antioxidant systems, redox factor PQQ and several members of the PE-PPE family.</text>
</comment>
<comment type="similarity">
    <text evidence="5">Belongs to the WhiB family.</text>
</comment>
<sequence length="118" mass="13211">MSGTRPAARRTNLTAAQNVVRSVDAEERIAWVSKALCRTTDPDELFVRGAAQRKAAVICRHCPVMQECAADALDNKVEFGVWGGMTERQRRALLKQHPEVVSWSDYLEKRKRRTGTAG</sequence>
<gene>
    <name type="primary">whiB4</name>
    <name type="ordered locus">Rv3681c</name>
</gene>
<evidence type="ECO:0000250" key="1"/>
<evidence type="ECO:0000269" key="2">
    <source>
    </source>
</evidence>
<evidence type="ECO:0000269" key="3">
    <source>
    </source>
</evidence>
<evidence type="ECO:0000269" key="4">
    <source>
    </source>
</evidence>
<evidence type="ECO:0000305" key="5"/>
<evidence type="ECO:0007829" key="6">
    <source>
        <dbReference type="PDB" id="7F7N"/>
    </source>
</evidence>
<protein>
    <recommendedName>
        <fullName>Transcriptional regulator WhiB4</fullName>
    </recommendedName>
</protein>
<keyword id="KW-0002">3D-structure</keyword>
<keyword id="KW-0004">4Fe-4S</keyword>
<keyword id="KW-0963">Cytoplasm</keyword>
<keyword id="KW-1015">Disulfide bond</keyword>
<keyword id="KW-0238">DNA-binding</keyword>
<keyword id="KW-0408">Iron</keyword>
<keyword id="KW-0411">Iron-sulfur</keyword>
<keyword id="KW-0479">Metal-binding</keyword>
<keyword id="KW-1185">Reference proteome</keyword>
<keyword id="KW-0804">Transcription</keyword>
<keyword id="KW-0805">Transcription regulation</keyword>